<organism>
    <name type="scientific">Malacoplasma penetrans (strain HF-2)</name>
    <name type="common">Mycoplasma penetrans</name>
    <dbReference type="NCBI Taxonomy" id="272633"/>
    <lineage>
        <taxon>Bacteria</taxon>
        <taxon>Bacillati</taxon>
        <taxon>Mycoplasmatota</taxon>
        <taxon>Mycoplasmoidales</taxon>
        <taxon>Mycoplasmoidaceae</taxon>
        <taxon>Malacoplasma</taxon>
    </lineage>
</organism>
<reference key="1">
    <citation type="journal article" date="2002" name="Nucleic Acids Res.">
        <title>The complete genomic sequence of Mycoplasma penetrans, an intracellular bacterial pathogen in humans.</title>
        <authorList>
            <person name="Sasaki Y."/>
            <person name="Ishikawa J."/>
            <person name="Yamashita A."/>
            <person name="Oshima K."/>
            <person name="Kenri T."/>
            <person name="Furuya K."/>
            <person name="Yoshino C."/>
            <person name="Horino A."/>
            <person name="Shiba T."/>
            <person name="Sasaki T."/>
            <person name="Hattori M."/>
        </authorList>
    </citation>
    <scope>NUCLEOTIDE SEQUENCE [LARGE SCALE GENOMIC DNA]</scope>
    <source>
        <strain>HF-2</strain>
    </source>
</reference>
<proteinExistence type="inferred from homology"/>
<gene>
    <name evidence="1" type="primary">lepA</name>
    <name type="ordered locus">MYPE510</name>
</gene>
<sequence length="600" mass="67356">MDKKYIRNFSIVAHIDHGKSTLSDRIIEFTNTLTTREMKNQILDSMDIERERGITIKLNAVQLIYHNPKDNQDYYFHLIDTPGHVDFTYEVSRSLAACEGALLVVDASQGVEAQTLSNVYLALENNLEIVPVINKIDLPSADIDRVKKQVEDTIGLDCSNAPLVSAKTGLNINQIMEAIIEQIPPPLDSDDNKPLQALVFDSYYDAYKGAVCLVRIKNGQVKVGTKIRFMSNNETFIVSALGVNTPKIVNKEVLVAGEVGWIAASIKNIKSISVGDTITDDANPATTSLPGYKKILPMVYCGLYPIDSTQYELFKEALEKIYLSDSSLTYEYETSQALGFGIRCGFLGLLHMDVIRERLDREFNIALIATAPSVIYKVLLNDGTILEIDSAAKLPDKTLYKEIQEPFAKAEIIVPDDFLGNVMELCQNYRGEYLDLVNVDSTRKKVTYLIPLAEIMYSFFDKLKSCSKGYATLDYEILDYRKQDLVKVDILLNGNKVDALSTIMHREFASDRSRKICLKLKEHIPKHQFEIPIQAVIGGKIIARETVSAMRKNVLAKCYGGDITRKKKLLEQQKEGKKRLKAIGNVSVPHDTFVKILSEE</sequence>
<dbReference type="EC" id="3.6.5.n1" evidence="1"/>
<dbReference type="EMBL" id="BA000026">
    <property type="protein sequence ID" value="BAC43841.1"/>
    <property type="molecule type" value="Genomic_DNA"/>
</dbReference>
<dbReference type="RefSeq" id="WP_011076877.1">
    <property type="nucleotide sequence ID" value="NC_004432.1"/>
</dbReference>
<dbReference type="SMR" id="Q8EWZ9"/>
<dbReference type="FunCoup" id="Q8EWZ9">
    <property type="interactions" value="236"/>
</dbReference>
<dbReference type="STRING" id="272633.gene:10731142"/>
<dbReference type="KEGG" id="mpe:MYPE510"/>
<dbReference type="eggNOG" id="COG0481">
    <property type="taxonomic scope" value="Bacteria"/>
</dbReference>
<dbReference type="HOGENOM" id="CLU_009995_3_3_14"/>
<dbReference type="InParanoid" id="Q8EWZ9"/>
<dbReference type="Proteomes" id="UP000002522">
    <property type="component" value="Chromosome"/>
</dbReference>
<dbReference type="GO" id="GO:0005886">
    <property type="term" value="C:plasma membrane"/>
    <property type="evidence" value="ECO:0007669"/>
    <property type="project" value="UniProtKB-SubCell"/>
</dbReference>
<dbReference type="GO" id="GO:0005525">
    <property type="term" value="F:GTP binding"/>
    <property type="evidence" value="ECO:0007669"/>
    <property type="project" value="UniProtKB-UniRule"/>
</dbReference>
<dbReference type="GO" id="GO:0003924">
    <property type="term" value="F:GTPase activity"/>
    <property type="evidence" value="ECO:0007669"/>
    <property type="project" value="UniProtKB-UniRule"/>
</dbReference>
<dbReference type="GO" id="GO:0043022">
    <property type="term" value="F:ribosome binding"/>
    <property type="evidence" value="ECO:0007669"/>
    <property type="project" value="UniProtKB-UniRule"/>
</dbReference>
<dbReference type="GO" id="GO:0003746">
    <property type="term" value="F:translation elongation factor activity"/>
    <property type="evidence" value="ECO:0007669"/>
    <property type="project" value="UniProtKB-UniRule"/>
</dbReference>
<dbReference type="GO" id="GO:0045727">
    <property type="term" value="P:positive regulation of translation"/>
    <property type="evidence" value="ECO:0007669"/>
    <property type="project" value="UniProtKB-UniRule"/>
</dbReference>
<dbReference type="CDD" id="cd03699">
    <property type="entry name" value="EF4_II"/>
    <property type="match status" value="1"/>
</dbReference>
<dbReference type="CDD" id="cd16260">
    <property type="entry name" value="EF4_III"/>
    <property type="match status" value="1"/>
</dbReference>
<dbReference type="CDD" id="cd01890">
    <property type="entry name" value="LepA"/>
    <property type="match status" value="1"/>
</dbReference>
<dbReference type="CDD" id="cd03709">
    <property type="entry name" value="lepA_C"/>
    <property type="match status" value="1"/>
</dbReference>
<dbReference type="FunFam" id="3.40.50.300:FF:000078">
    <property type="entry name" value="Elongation factor 4"/>
    <property type="match status" value="1"/>
</dbReference>
<dbReference type="FunFam" id="2.40.30.10:FF:000015">
    <property type="entry name" value="Translation factor GUF1, mitochondrial"/>
    <property type="match status" value="1"/>
</dbReference>
<dbReference type="FunFam" id="3.30.70.240:FF:000007">
    <property type="entry name" value="Translation factor GUF1, mitochondrial"/>
    <property type="match status" value="1"/>
</dbReference>
<dbReference type="FunFam" id="3.30.70.2570:FF:000001">
    <property type="entry name" value="Translation factor GUF1, mitochondrial"/>
    <property type="match status" value="1"/>
</dbReference>
<dbReference type="FunFam" id="3.30.70.870:FF:000004">
    <property type="entry name" value="Translation factor GUF1, mitochondrial"/>
    <property type="match status" value="1"/>
</dbReference>
<dbReference type="Gene3D" id="3.30.70.240">
    <property type="match status" value="1"/>
</dbReference>
<dbReference type="Gene3D" id="3.30.70.2570">
    <property type="entry name" value="Elongation factor 4, C-terminal domain"/>
    <property type="match status" value="1"/>
</dbReference>
<dbReference type="Gene3D" id="3.30.70.870">
    <property type="entry name" value="Elongation Factor G (Translational Gtpase), domain 3"/>
    <property type="match status" value="1"/>
</dbReference>
<dbReference type="Gene3D" id="3.40.50.300">
    <property type="entry name" value="P-loop containing nucleotide triphosphate hydrolases"/>
    <property type="match status" value="1"/>
</dbReference>
<dbReference type="Gene3D" id="2.40.30.10">
    <property type="entry name" value="Translation factors"/>
    <property type="match status" value="1"/>
</dbReference>
<dbReference type="HAMAP" id="MF_00071">
    <property type="entry name" value="LepA"/>
    <property type="match status" value="1"/>
</dbReference>
<dbReference type="InterPro" id="IPR006297">
    <property type="entry name" value="EF-4"/>
</dbReference>
<dbReference type="InterPro" id="IPR035647">
    <property type="entry name" value="EFG_III/V"/>
</dbReference>
<dbReference type="InterPro" id="IPR000640">
    <property type="entry name" value="EFG_V-like"/>
</dbReference>
<dbReference type="InterPro" id="IPR004161">
    <property type="entry name" value="EFTu-like_2"/>
</dbReference>
<dbReference type="InterPro" id="IPR031157">
    <property type="entry name" value="G_TR_CS"/>
</dbReference>
<dbReference type="InterPro" id="IPR038363">
    <property type="entry name" value="LepA_C_sf"/>
</dbReference>
<dbReference type="InterPro" id="IPR013842">
    <property type="entry name" value="LepA_CTD"/>
</dbReference>
<dbReference type="InterPro" id="IPR035654">
    <property type="entry name" value="LepA_IV"/>
</dbReference>
<dbReference type="InterPro" id="IPR027417">
    <property type="entry name" value="P-loop_NTPase"/>
</dbReference>
<dbReference type="InterPro" id="IPR005225">
    <property type="entry name" value="Small_GTP-bd"/>
</dbReference>
<dbReference type="InterPro" id="IPR000795">
    <property type="entry name" value="T_Tr_GTP-bd_dom"/>
</dbReference>
<dbReference type="InterPro" id="IPR009000">
    <property type="entry name" value="Transl_B-barrel_sf"/>
</dbReference>
<dbReference type="NCBIfam" id="TIGR01393">
    <property type="entry name" value="lepA"/>
    <property type="match status" value="1"/>
</dbReference>
<dbReference type="NCBIfam" id="TIGR00231">
    <property type="entry name" value="small_GTP"/>
    <property type="match status" value="1"/>
</dbReference>
<dbReference type="PANTHER" id="PTHR43512:SF4">
    <property type="entry name" value="TRANSLATION FACTOR GUF1 HOMOLOG, CHLOROPLASTIC"/>
    <property type="match status" value="1"/>
</dbReference>
<dbReference type="PANTHER" id="PTHR43512">
    <property type="entry name" value="TRANSLATION FACTOR GUF1-RELATED"/>
    <property type="match status" value="1"/>
</dbReference>
<dbReference type="Pfam" id="PF00679">
    <property type="entry name" value="EFG_C"/>
    <property type="match status" value="1"/>
</dbReference>
<dbReference type="Pfam" id="PF00009">
    <property type="entry name" value="GTP_EFTU"/>
    <property type="match status" value="1"/>
</dbReference>
<dbReference type="Pfam" id="PF03144">
    <property type="entry name" value="GTP_EFTU_D2"/>
    <property type="match status" value="1"/>
</dbReference>
<dbReference type="Pfam" id="PF06421">
    <property type="entry name" value="LepA_C"/>
    <property type="match status" value="1"/>
</dbReference>
<dbReference type="PRINTS" id="PR00315">
    <property type="entry name" value="ELONGATNFCT"/>
</dbReference>
<dbReference type="SUPFAM" id="SSF54980">
    <property type="entry name" value="EF-G C-terminal domain-like"/>
    <property type="match status" value="2"/>
</dbReference>
<dbReference type="SUPFAM" id="SSF52540">
    <property type="entry name" value="P-loop containing nucleoside triphosphate hydrolases"/>
    <property type="match status" value="1"/>
</dbReference>
<dbReference type="SUPFAM" id="SSF50447">
    <property type="entry name" value="Translation proteins"/>
    <property type="match status" value="1"/>
</dbReference>
<dbReference type="PROSITE" id="PS00301">
    <property type="entry name" value="G_TR_1"/>
    <property type="match status" value="1"/>
</dbReference>
<dbReference type="PROSITE" id="PS51722">
    <property type="entry name" value="G_TR_2"/>
    <property type="match status" value="1"/>
</dbReference>
<evidence type="ECO:0000255" key="1">
    <source>
        <dbReference type="HAMAP-Rule" id="MF_00071"/>
    </source>
</evidence>
<keyword id="KW-1003">Cell membrane</keyword>
<keyword id="KW-0342">GTP-binding</keyword>
<keyword id="KW-0378">Hydrolase</keyword>
<keyword id="KW-0472">Membrane</keyword>
<keyword id="KW-0547">Nucleotide-binding</keyword>
<keyword id="KW-0648">Protein biosynthesis</keyword>
<keyword id="KW-1185">Reference proteome</keyword>
<comment type="function">
    <text evidence="1">Required for accurate and efficient protein synthesis under certain stress conditions. May act as a fidelity factor of the translation reaction, by catalyzing a one-codon backward translocation of tRNAs on improperly translocated ribosomes. Back-translocation proceeds from a post-translocation (POST) complex to a pre-translocation (PRE) complex, thus giving elongation factor G a second chance to translocate the tRNAs correctly. Binds to ribosomes in a GTP-dependent manner.</text>
</comment>
<comment type="catalytic activity">
    <reaction evidence="1">
        <text>GTP + H2O = GDP + phosphate + H(+)</text>
        <dbReference type="Rhea" id="RHEA:19669"/>
        <dbReference type="ChEBI" id="CHEBI:15377"/>
        <dbReference type="ChEBI" id="CHEBI:15378"/>
        <dbReference type="ChEBI" id="CHEBI:37565"/>
        <dbReference type="ChEBI" id="CHEBI:43474"/>
        <dbReference type="ChEBI" id="CHEBI:58189"/>
        <dbReference type="EC" id="3.6.5.n1"/>
    </reaction>
</comment>
<comment type="subcellular location">
    <subcellularLocation>
        <location evidence="1">Cell membrane</location>
        <topology evidence="1">Peripheral membrane protein</topology>
        <orientation evidence="1">Cytoplasmic side</orientation>
    </subcellularLocation>
</comment>
<comment type="similarity">
    <text evidence="1">Belongs to the TRAFAC class translation factor GTPase superfamily. Classic translation factor GTPase family. LepA subfamily.</text>
</comment>
<protein>
    <recommendedName>
        <fullName evidence="1">Elongation factor 4</fullName>
        <shortName evidence="1">EF-4</shortName>
        <ecNumber evidence="1">3.6.5.n1</ecNumber>
    </recommendedName>
    <alternativeName>
        <fullName evidence="1">Ribosomal back-translocase LepA</fullName>
    </alternativeName>
</protein>
<accession>Q8EWZ9</accession>
<name>LEPA_MALP2</name>
<feature type="chain" id="PRO_0000176304" description="Elongation factor 4">
    <location>
        <begin position="1"/>
        <end position="600"/>
    </location>
</feature>
<feature type="domain" description="tr-type G">
    <location>
        <begin position="4"/>
        <end position="187"/>
    </location>
</feature>
<feature type="binding site" evidence="1">
    <location>
        <begin position="16"/>
        <end position="21"/>
    </location>
    <ligand>
        <name>GTP</name>
        <dbReference type="ChEBI" id="CHEBI:37565"/>
    </ligand>
</feature>
<feature type="binding site" evidence="1">
    <location>
        <begin position="134"/>
        <end position="137"/>
    </location>
    <ligand>
        <name>GTP</name>
        <dbReference type="ChEBI" id="CHEBI:37565"/>
    </ligand>
</feature>